<organism>
    <name type="scientific">Clostridium botulinum (strain Alaska E43 / Type E3)</name>
    <dbReference type="NCBI Taxonomy" id="508767"/>
    <lineage>
        <taxon>Bacteria</taxon>
        <taxon>Bacillati</taxon>
        <taxon>Bacillota</taxon>
        <taxon>Clostridia</taxon>
        <taxon>Eubacteriales</taxon>
        <taxon>Clostridiaceae</taxon>
        <taxon>Clostridium</taxon>
    </lineage>
</organism>
<name>CSRA_CLOBA</name>
<dbReference type="EMBL" id="CP001078">
    <property type="protein sequence ID" value="ACD51869.1"/>
    <property type="molecule type" value="Genomic_DNA"/>
</dbReference>
<dbReference type="RefSeq" id="WP_003373164.1">
    <property type="nucleotide sequence ID" value="NC_010723.1"/>
</dbReference>
<dbReference type="SMR" id="B2V1Z8"/>
<dbReference type="KEGG" id="cbt:CLH_0777"/>
<dbReference type="HOGENOM" id="CLU_164837_0_0_9"/>
<dbReference type="GO" id="GO:0005829">
    <property type="term" value="C:cytosol"/>
    <property type="evidence" value="ECO:0007669"/>
    <property type="project" value="TreeGrafter"/>
</dbReference>
<dbReference type="GO" id="GO:0048027">
    <property type="term" value="F:mRNA 5'-UTR binding"/>
    <property type="evidence" value="ECO:0007669"/>
    <property type="project" value="UniProtKB-UniRule"/>
</dbReference>
<dbReference type="GO" id="GO:0044781">
    <property type="term" value="P:bacterial-type flagellum organization"/>
    <property type="evidence" value="ECO:0007669"/>
    <property type="project" value="UniProtKB-KW"/>
</dbReference>
<dbReference type="GO" id="GO:0006402">
    <property type="term" value="P:mRNA catabolic process"/>
    <property type="evidence" value="ECO:0007669"/>
    <property type="project" value="InterPro"/>
</dbReference>
<dbReference type="GO" id="GO:0045947">
    <property type="term" value="P:negative regulation of translational initiation"/>
    <property type="evidence" value="ECO:0007669"/>
    <property type="project" value="UniProtKB-UniRule"/>
</dbReference>
<dbReference type="GO" id="GO:1902208">
    <property type="term" value="P:regulation of bacterial-type flagellum assembly"/>
    <property type="evidence" value="ECO:0007669"/>
    <property type="project" value="UniProtKB-UniRule"/>
</dbReference>
<dbReference type="GO" id="GO:0006109">
    <property type="term" value="P:regulation of carbohydrate metabolic process"/>
    <property type="evidence" value="ECO:0007669"/>
    <property type="project" value="InterPro"/>
</dbReference>
<dbReference type="FunFam" id="2.60.40.4380:FF:000002">
    <property type="entry name" value="Translational regulator CsrA"/>
    <property type="match status" value="1"/>
</dbReference>
<dbReference type="Gene3D" id="2.60.40.4380">
    <property type="entry name" value="Translational regulator CsrA"/>
    <property type="match status" value="1"/>
</dbReference>
<dbReference type="HAMAP" id="MF_00167">
    <property type="entry name" value="CsrA"/>
    <property type="match status" value="1"/>
</dbReference>
<dbReference type="InterPro" id="IPR003751">
    <property type="entry name" value="CsrA"/>
</dbReference>
<dbReference type="InterPro" id="IPR036107">
    <property type="entry name" value="CsrA_sf"/>
</dbReference>
<dbReference type="NCBIfam" id="TIGR00202">
    <property type="entry name" value="csrA"/>
    <property type="match status" value="1"/>
</dbReference>
<dbReference type="NCBIfam" id="NF002469">
    <property type="entry name" value="PRK01712.1"/>
    <property type="match status" value="1"/>
</dbReference>
<dbReference type="PANTHER" id="PTHR34984">
    <property type="entry name" value="CARBON STORAGE REGULATOR"/>
    <property type="match status" value="1"/>
</dbReference>
<dbReference type="PANTHER" id="PTHR34984:SF1">
    <property type="entry name" value="CARBON STORAGE REGULATOR"/>
    <property type="match status" value="1"/>
</dbReference>
<dbReference type="Pfam" id="PF02599">
    <property type="entry name" value="CsrA"/>
    <property type="match status" value="1"/>
</dbReference>
<dbReference type="SUPFAM" id="SSF117130">
    <property type="entry name" value="CsrA-like"/>
    <property type="match status" value="1"/>
</dbReference>
<protein>
    <recommendedName>
        <fullName evidence="1">Translational regulator CsrA</fullName>
    </recommendedName>
</protein>
<proteinExistence type="inferred from homology"/>
<keyword id="KW-1005">Bacterial flagellum biogenesis</keyword>
<keyword id="KW-0963">Cytoplasm</keyword>
<keyword id="KW-0678">Repressor</keyword>
<keyword id="KW-0694">RNA-binding</keyword>
<keyword id="KW-0810">Translation regulation</keyword>
<gene>
    <name evidence="1" type="primary">csrA</name>
    <name type="ordered locus">CLH_0777</name>
</gene>
<reference key="1">
    <citation type="submission" date="2008-05" db="EMBL/GenBank/DDBJ databases">
        <title>Complete genome sequence of Clostridium botulinum E3 str. Alaska E43.</title>
        <authorList>
            <person name="Brinkac L.M."/>
            <person name="Brown J.L."/>
            <person name="Bruce D."/>
            <person name="Detter C."/>
            <person name="Munk C."/>
            <person name="Smith L.A."/>
            <person name="Smith T.J."/>
            <person name="Sutton G."/>
            <person name="Brettin T.S."/>
        </authorList>
    </citation>
    <scope>NUCLEOTIDE SEQUENCE [LARGE SCALE GENOMIC DNA]</scope>
    <source>
        <strain>Alaska E43 / Type E3</strain>
    </source>
</reference>
<accession>B2V1Z8</accession>
<evidence type="ECO:0000255" key="1">
    <source>
        <dbReference type="HAMAP-Rule" id="MF_00167"/>
    </source>
</evidence>
<comment type="function">
    <text evidence="1">A translational regulator that binds mRNA to regulate translation initiation and/or mRNA stability. Usually binds in the 5'-UTR at or near the Shine-Dalgarno sequence preventing ribosome-binding, thus repressing translation. Its main target seems to be the major flagellin gene, while its function is anatagonized by FliW.</text>
</comment>
<comment type="subunit">
    <text evidence="1">Homodimer; the beta-strands of each monomer intercalate to form a hydrophobic core, while the alpha-helices form wings that extend away from the core.</text>
</comment>
<comment type="subcellular location">
    <subcellularLocation>
        <location evidence="1">Cytoplasm</location>
    </subcellularLocation>
</comment>
<comment type="similarity">
    <text evidence="1">Belongs to the CsrA/RsmA family.</text>
</comment>
<sequence length="71" mass="8099">MLIITRKKDESLMIGDNIEITVLKLEDGSVKLGINAPRETTILRKELYEAVKQENKKAMNIDMNLLKGLKK</sequence>
<feature type="chain" id="PRO_1000097484" description="Translational regulator CsrA">
    <location>
        <begin position="1"/>
        <end position="71"/>
    </location>
</feature>